<name>SECE_HALH5</name>
<reference key="1">
    <citation type="journal article" date="2000" name="Nucleic Acids Res.">
        <title>Complete genome sequence of the alkaliphilic bacterium Bacillus halodurans and genomic sequence comparison with Bacillus subtilis.</title>
        <authorList>
            <person name="Takami H."/>
            <person name="Nakasone K."/>
            <person name="Takaki Y."/>
            <person name="Maeno G."/>
            <person name="Sasaki R."/>
            <person name="Masui N."/>
            <person name="Fuji F."/>
            <person name="Hirama C."/>
            <person name="Nakamura Y."/>
            <person name="Ogasawara N."/>
            <person name="Kuhara S."/>
            <person name="Horikoshi K."/>
        </authorList>
    </citation>
    <scope>NUCLEOTIDE SEQUENCE [LARGE SCALE GENOMIC DNA]</scope>
    <source>
        <strain>ATCC BAA-125 / DSM 18197 / FERM 7344 / JCM 9153 / C-125</strain>
    </source>
</reference>
<feature type="chain" id="PRO_0000104156" description="Protein translocase subunit SecE">
    <location>
        <begin position="1"/>
        <end position="64"/>
    </location>
</feature>
<feature type="transmembrane region" description="Helical" evidence="1">
    <location>
        <begin position="35"/>
        <end position="55"/>
    </location>
</feature>
<protein>
    <recommendedName>
        <fullName evidence="1">Protein translocase subunit SecE</fullName>
    </recommendedName>
</protein>
<comment type="function">
    <text evidence="1">Essential subunit of the Sec protein translocation channel SecYEG. Clamps together the 2 halves of SecY. May contact the channel plug during translocation.</text>
</comment>
<comment type="subunit">
    <text evidence="1">Component of the Sec protein translocase complex. Heterotrimer consisting of SecY, SecE and SecG subunits. The heterotrimers can form oligomers, although 1 heterotrimer is thought to be able to translocate proteins. Interacts with the ribosome. Interacts with SecDF, and other proteins may be involved. Interacts with SecA.</text>
</comment>
<comment type="subcellular location">
    <subcellularLocation>
        <location evidence="1">Cell membrane</location>
        <topology evidence="1">Single-pass membrane protein</topology>
    </subcellularLocation>
</comment>
<comment type="similarity">
    <text evidence="1">Belongs to the SecE/SEC61-gamma family.</text>
</comment>
<dbReference type="EMBL" id="BA000004">
    <property type="protein sequence ID" value="BAB03836.1"/>
    <property type="molecule type" value="Genomic_DNA"/>
</dbReference>
<dbReference type="PIR" id="E83664">
    <property type="entry name" value="E83664"/>
</dbReference>
<dbReference type="RefSeq" id="WP_010896300.1">
    <property type="nucleotide sequence ID" value="NC_002570.2"/>
</dbReference>
<dbReference type="SMR" id="Q9KGE8"/>
<dbReference type="STRING" id="272558.gene:10725957"/>
<dbReference type="GeneID" id="87595660"/>
<dbReference type="KEGG" id="bha:BH0117"/>
<dbReference type="eggNOG" id="COG0690">
    <property type="taxonomic scope" value="Bacteria"/>
</dbReference>
<dbReference type="HOGENOM" id="CLU_113663_8_2_9"/>
<dbReference type="OrthoDB" id="9813233at2"/>
<dbReference type="Proteomes" id="UP000001258">
    <property type="component" value="Chromosome"/>
</dbReference>
<dbReference type="GO" id="GO:0005886">
    <property type="term" value="C:plasma membrane"/>
    <property type="evidence" value="ECO:0007669"/>
    <property type="project" value="UniProtKB-SubCell"/>
</dbReference>
<dbReference type="GO" id="GO:0008320">
    <property type="term" value="F:protein transmembrane transporter activity"/>
    <property type="evidence" value="ECO:0007669"/>
    <property type="project" value="UniProtKB-UniRule"/>
</dbReference>
<dbReference type="GO" id="GO:0065002">
    <property type="term" value="P:intracellular protein transmembrane transport"/>
    <property type="evidence" value="ECO:0007669"/>
    <property type="project" value="UniProtKB-UniRule"/>
</dbReference>
<dbReference type="GO" id="GO:0009306">
    <property type="term" value="P:protein secretion"/>
    <property type="evidence" value="ECO:0007669"/>
    <property type="project" value="UniProtKB-UniRule"/>
</dbReference>
<dbReference type="GO" id="GO:0006605">
    <property type="term" value="P:protein targeting"/>
    <property type="evidence" value="ECO:0007669"/>
    <property type="project" value="UniProtKB-UniRule"/>
</dbReference>
<dbReference type="GO" id="GO:0043952">
    <property type="term" value="P:protein transport by the Sec complex"/>
    <property type="evidence" value="ECO:0007669"/>
    <property type="project" value="UniProtKB-UniRule"/>
</dbReference>
<dbReference type="Gene3D" id="1.20.5.1030">
    <property type="entry name" value="Preprotein translocase secy subunit"/>
    <property type="match status" value="1"/>
</dbReference>
<dbReference type="HAMAP" id="MF_00422">
    <property type="entry name" value="SecE"/>
    <property type="match status" value="1"/>
</dbReference>
<dbReference type="InterPro" id="IPR005807">
    <property type="entry name" value="SecE_bac"/>
</dbReference>
<dbReference type="InterPro" id="IPR038379">
    <property type="entry name" value="SecE_sf"/>
</dbReference>
<dbReference type="InterPro" id="IPR001901">
    <property type="entry name" value="Translocase_SecE/Sec61-g"/>
</dbReference>
<dbReference type="NCBIfam" id="TIGR00964">
    <property type="entry name" value="secE_bact"/>
    <property type="match status" value="1"/>
</dbReference>
<dbReference type="PANTHER" id="PTHR33910">
    <property type="entry name" value="PROTEIN TRANSLOCASE SUBUNIT SECE"/>
    <property type="match status" value="1"/>
</dbReference>
<dbReference type="PANTHER" id="PTHR33910:SF1">
    <property type="entry name" value="PROTEIN TRANSLOCASE SUBUNIT SECE"/>
    <property type="match status" value="1"/>
</dbReference>
<dbReference type="Pfam" id="PF00584">
    <property type="entry name" value="SecE"/>
    <property type="match status" value="1"/>
</dbReference>
<dbReference type="PROSITE" id="PS01067">
    <property type="entry name" value="SECE_SEC61G"/>
    <property type="match status" value="1"/>
</dbReference>
<accession>Q9KGE8</accession>
<proteinExistence type="inferred from homology"/>
<evidence type="ECO:0000255" key="1">
    <source>
        <dbReference type="HAMAP-Rule" id="MF_00422"/>
    </source>
</evidence>
<organism>
    <name type="scientific">Halalkalibacterium halodurans (strain ATCC BAA-125 / DSM 18197 / FERM 7344 / JCM 9153 / C-125)</name>
    <name type="common">Bacillus halodurans</name>
    <dbReference type="NCBI Taxonomy" id="272558"/>
    <lineage>
        <taxon>Bacteria</taxon>
        <taxon>Bacillati</taxon>
        <taxon>Bacillota</taxon>
        <taxon>Bacilli</taxon>
        <taxon>Bacillales</taxon>
        <taxon>Bacillaceae</taxon>
        <taxon>Halalkalibacterium (ex Joshi et al. 2022)</taxon>
    </lineage>
</organism>
<keyword id="KW-1003">Cell membrane</keyword>
<keyword id="KW-0472">Membrane</keyword>
<keyword id="KW-0653">Protein transport</keyword>
<keyword id="KW-1185">Reference proteome</keyword>
<keyword id="KW-0811">Translocation</keyword>
<keyword id="KW-0812">Transmembrane</keyword>
<keyword id="KW-1133">Transmembrane helix</keyword>
<keyword id="KW-0813">Transport</keyword>
<gene>
    <name evidence="1" type="primary">secE</name>
    <name type="ordered locus">BH0117</name>
</gene>
<sequence length="64" mass="6981">MAGGVKGIGKFFGDVVAEMKRVSWPTRKELTRYTLVVLGTVAFITVFFAVVDYGISALVRGLIE</sequence>